<gene>
    <name evidence="1" type="primary">purC</name>
    <name type="ordered locus">CYB_1784</name>
</gene>
<comment type="catalytic activity">
    <reaction evidence="1">
        <text>5-amino-1-(5-phospho-D-ribosyl)imidazole-4-carboxylate + L-aspartate + ATP = (2S)-2-[5-amino-1-(5-phospho-beta-D-ribosyl)imidazole-4-carboxamido]succinate + ADP + phosphate + 2 H(+)</text>
        <dbReference type="Rhea" id="RHEA:22628"/>
        <dbReference type="ChEBI" id="CHEBI:15378"/>
        <dbReference type="ChEBI" id="CHEBI:29991"/>
        <dbReference type="ChEBI" id="CHEBI:30616"/>
        <dbReference type="ChEBI" id="CHEBI:43474"/>
        <dbReference type="ChEBI" id="CHEBI:58443"/>
        <dbReference type="ChEBI" id="CHEBI:77657"/>
        <dbReference type="ChEBI" id="CHEBI:456216"/>
        <dbReference type="EC" id="6.3.2.6"/>
    </reaction>
</comment>
<comment type="pathway">
    <text evidence="1">Purine metabolism; IMP biosynthesis via de novo pathway; 5-amino-1-(5-phospho-D-ribosyl)imidazole-4-carboxamide from 5-amino-1-(5-phospho-D-ribosyl)imidazole-4-carboxylate: step 1/2.</text>
</comment>
<comment type="similarity">
    <text evidence="1">Belongs to the SAICAR synthetase family.</text>
</comment>
<protein>
    <recommendedName>
        <fullName evidence="1">Phosphoribosylaminoimidazole-succinocarboxamide synthase</fullName>
        <ecNumber evidence="1">6.3.2.6</ecNumber>
    </recommendedName>
    <alternativeName>
        <fullName evidence="1">SAICAR synthetase</fullName>
    </alternativeName>
</protein>
<sequence length="247" mass="27749">MPFSPQELLYEGKAKRIYRTADPRVYLCQYKDDATAFNAQKRGSIAGKGEVNCTVSSHVFAYLAQQGIPNHFLAQTGPTEMQVRALHILPLEVVVRNRTAGSLCKRLGLEQGLPIQPPLVEFYYKNDALGDPLVTPDHIRLLQLATPEQVERLGSLALAINNHLQAFWRSCRLELVDFKLEFGLDEKGEILLADEISPDTCRLWDRGGSEPRVLDKDLFRFDLGDPVAGYQEVLQRVLQAVGSQFLL</sequence>
<proteinExistence type="inferred from homology"/>
<name>PUR7_SYNJB</name>
<keyword id="KW-0067">ATP-binding</keyword>
<keyword id="KW-0436">Ligase</keyword>
<keyword id="KW-0547">Nucleotide-binding</keyword>
<keyword id="KW-0658">Purine biosynthesis</keyword>
<keyword id="KW-1185">Reference proteome</keyword>
<evidence type="ECO:0000255" key="1">
    <source>
        <dbReference type="HAMAP-Rule" id="MF_00137"/>
    </source>
</evidence>
<dbReference type="EC" id="6.3.2.6" evidence="1"/>
<dbReference type="EMBL" id="CP000240">
    <property type="protein sequence ID" value="ABD02741.1"/>
    <property type="molecule type" value="Genomic_DNA"/>
</dbReference>
<dbReference type="RefSeq" id="WP_011433383.1">
    <property type="nucleotide sequence ID" value="NC_007776.1"/>
</dbReference>
<dbReference type="SMR" id="Q2JKP0"/>
<dbReference type="STRING" id="321332.CYB_1784"/>
<dbReference type="KEGG" id="cyb:CYB_1784"/>
<dbReference type="eggNOG" id="COG0152">
    <property type="taxonomic scope" value="Bacteria"/>
</dbReference>
<dbReference type="HOGENOM" id="CLU_061495_2_0_3"/>
<dbReference type="OrthoDB" id="9801549at2"/>
<dbReference type="UniPathway" id="UPA00074">
    <property type="reaction ID" value="UER00131"/>
</dbReference>
<dbReference type="Proteomes" id="UP000001938">
    <property type="component" value="Chromosome"/>
</dbReference>
<dbReference type="GO" id="GO:0005524">
    <property type="term" value="F:ATP binding"/>
    <property type="evidence" value="ECO:0007669"/>
    <property type="project" value="UniProtKB-KW"/>
</dbReference>
<dbReference type="GO" id="GO:0004639">
    <property type="term" value="F:phosphoribosylaminoimidazolesuccinocarboxamide synthase activity"/>
    <property type="evidence" value="ECO:0007669"/>
    <property type="project" value="UniProtKB-UniRule"/>
</dbReference>
<dbReference type="GO" id="GO:0006189">
    <property type="term" value="P:'de novo' IMP biosynthetic process"/>
    <property type="evidence" value="ECO:0007669"/>
    <property type="project" value="UniProtKB-UniRule"/>
</dbReference>
<dbReference type="GO" id="GO:0009236">
    <property type="term" value="P:cobalamin biosynthetic process"/>
    <property type="evidence" value="ECO:0007669"/>
    <property type="project" value="InterPro"/>
</dbReference>
<dbReference type="CDD" id="cd01415">
    <property type="entry name" value="SAICAR_synt_PurC"/>
    <property type="match status" value="1"/>
</dbReference>
<dbReference type="FunFam" id="3.30.470.20:FF:000006">
    <property type="entry name" value="Phosphoribosylaminoimidazole-succinocarboxamide synthase"/>
    <property type="match status" value="1"/>
</dbReference>
<dbReference type="Gene3D" id="3.30.470.20">
    <property type="entry name" value="ATP-grasp fold, B domain"/>
    <property type="match status" value="1"/>
</dbReference>
<dbReference type="Gene3D" id="3.30.200.20">
    <property type="entry name" value="Phosphorylase Kinase, domain 1"/>
    <property type="match status" value="1"/>
</dbReference>
<dbReference type="HAMAP" id="MF_00137">
    <property type="entry name" value="SAICAR_synth"/>
    <property type="match status" value="1"/>
</dbReference>
<dbReference type="InterPro" id="IPR028923">
    <property type="entry name" value="SAICAR_synt/ADE2_N"/>
</dbReference>
<dbReference type="InterPro" id="IPR033934">
    <property type="entry name" value="SAICAR_synt_PurC"/>
</dbReference>
<dbReference type="InterPro" id="IPR001636">
    <property type="entry name" value="SAICAR_synth"/>
</dbReference>
<dbReference type="InterPro" id="IPR050089">
    <property type="entry name" value="SAICAR_synthetase"/>
</dbReference>
<dbReference type="InterPro" id="IPR018236">
    <property type="entry name" value="SAICAR_synthetase_CS"/>
</dbReference>
<dbReference type="NCBIfam" id="TIGR00081">
    <property type="entry name" value="purC"/>
    <property type="match status" value="1"/>
</dbReference>
<dbReference type="PANTHER" id="PTHR43599">
    <property type="entry name" value="MULTIFUNCTIONAL PROTEIN ADE2"/>
    <property type="match status" value="1"/>
</dbReference>
<dbReference type="PANTHER" id="PTHR43599:SF3">
    <property type="entry name" value="SI:DKEY-6E2.2"/>
    <property type="match status" value="1"/>
</dbReference>
<dbReference type="Pfam" id="PF01259">
    <property type="entry name" value="SAICAR_synt"/>
    <property type="match status" value="1"/>
</dbReference>
<dbReference type="SUPFAM" id="SSF56104">
    <property type="entry name" value="SAICAR synthase-like"/>
    <property type="match status" value="1"/>
</dbReference>
<dbReference type="PROSITE" id="PS01057">
    <property type="entry name" value="SAICAR_SYNTHETASE_1"/>
    <property type="match status" value="1"/>
</dbReference>
<dbReference type="PROSITE" id="PS01058">
    <property type="entry name" value="SAICAR_SYNTHETASE_2"/>
    <property type="match status" value="1"/>
</dbReference>
<organism>
    <name type="scientific">Synechococcus sp. (strain JA-2-3B'a(2-13))</name>
    <name type="common">Cyanobacteria bacterium Yellowstone B-Prime</name>
    <dbReference type="NCBI Taxonomy" id="321332"/>
    <lineage>
        <taxon>Bacteria</taxon>
        <taxon>Bacillati</taxon>
        <taxon>Cyanobacteriota</taxon>
        <taxon>Cyanophyceae</taxon>
        <taxon>Synechococcales</taxon>
        <taxon>Synechococcaceae</taxon>
        <taxon>Synechococcus</taxon>
    </lineage>
</organism>
<feature type="chain" id="PRO_1000018800" description="Phosphoribosylaminoimidazole-succinocarboxamide synthase">
    <location>
        <begin position="1"/>
        <end position="247"/>
    </location>
</feature>
<accession>Q2JKP0</accession>
<reference key="1">
    <citation type="journal article" date="2007" name="ISME J.">
        <title>Population level functional diversity in a microbial community revealed by comparative genomic and metagenomic analyses.</title>
        <authorList>
            <person name="Bhaya D."/>
            <person name="Grossman A.R."/>
            <person name="Steunou A.-S."/>
            <person name="Khuri N."/>
            <person name="Cohan F.M."/>
            <person name="Hamamura N."/>
            <person name="Melendrez M.C."/>
            <person name="Bateson M.M."/>
            <person name="Ward D.M."/>
            <person name="Heidelberg J.F."/>
        </authorList>
    </citation>
    <scope>NUCLEOTIDE SEQUENCE [LARGE SCALE GENOMIC DNA]</scope>
    <source>
        <strain>JA-2-3B'a(2-13)</strain>
    </source>
</reference>